<protein>
    <recommendedName>
        <fullName>DnaJ homolog subfamily C member 2</fullName>
    </recommendedName>
    <alternativeName>
        <fullName>Zuotin-related factor 1</fullName>
    </alternativeName>
</protein>
<comment type="function">
    <text evidence="2">Acts both as a chaperone in the cytosol and as a chromatin regulator in the nucleus. When cytosolic, acts as a molecular chaperone: component of the ribosome-associated complex (RAC), a complex involved in folding or maintaining nascent polypeptides in a folding-competent state. In the RAC complex, stimulates the ATPase activity of the ribosome-associated pool of Hsp70-type chaperones HSPA14 that bind to the nascent polypeptide chain. When nuclear, mediates the switching from polycomb-repressed genes to an active state: specifically recruited at histone H2A ubiquitinated at 'Lys-119' (H2AK119ub), and promotes the displacement of the polycomb PRC1 complex from chromatin, thereby facilitating transcription activation.</text>
</comment>
<comment type="subunit">
    <text evidence="1 2">Component of ribosome-associated complex (RAC), a heterodimer composed of Hsp70/DnaK-type chaperone HSPA14 and Hsp40/DnaJ-type chaperone DNAJC2 (By similarity). Interacts (via ZRF1-UBD region) with ID1 (By similarity).</text>
</comment>
<comment type="subcellular location">
    <subcellularLocation>
        <location evidence="2">Nucleus</location>
    </subcellularLocation>
    <subcellularLocation>
        <location evidence="2">Cytoplasm</location>
        <location evidence="2">Cytosol</location>
    </subcellularLocation>
</comment>
<comment type="domain">
    <text evidence="2">The ZRF1-UBD region specifically recognizes and binds H2AK119ub. The ZRF1-UBD region is also involved in protein-protein interactions with other proteins, suggesting that it may be masked by some regulator, thereby preventing its association with H2AK119ub.</text>
</comment>
<comment type="PTM">
    <text evidence="2">Phosphorylated in M (mitotic) phase.</text>
</comment>
<organism>
    <name type="scientific">Macaca fascicularis</name>
    <name type="common">Crab-eating macaque</name>
    <name type="synonym">Cynomolgus monkey</name>
    <dbReference type="NCBI Taxonomy" id="9541"/>
    <lineage>
        <taxon>Eukaryota</taxon>
        <taxon>Metazoa</taxon>
        <taxon>Chordata</taxon>
        <taxon>Craniata</taxon>
        <taxon>Vertebrata</taxon>
        <taxon>Euteleostomi</taxon>
        <taxon>Mammalia</taxon>
        <taxon>Eutheria</taxon>
        <taxon>Euarchontoglires</taxon>
        <taxon>Primates</taxon>
        <taxon>Haplorrhini</taxon>
        <taxon>Catarrhini</taxon>
        <taxon>Cercopithecidae</taxon>
        <taxon>Cercopithecinae</taxon>
        <taxon>Macaca</taxon>
    </lineage>
</organism>
<gene>
    <name type="primary">DNAJC2</name>
    <name type="synonym">ZRF1</name>
    <name type="ORF">QtsA-12474</name>
</gene>
<keyword id="KW-0007">Acetylation</keyword>
<keyword id="KW-0010">Activator</keyword>
<keyword id="KW-0143">Chaperone</keyword>
<keyword id="KW-0156">Chromatin regulator</keyword>
<keyword id="KW-0963">Cytoplasm</keyword>
<keyword id="KW-0539">Nucleus</keyword>
<keyword id="KW-0597">Phosphoprotein</keyword>
<keyword id="KW-1185">Reference proteome</keyword>
<keyword id="KW-0677">Repeat</keyword>
<keyword id="KW-0804">Transcription</keyword>
<keyword id="KW-0805">Transcription regulation</keyword>
<proteinExistence type="evidence at transcript level"/>
<sequence>MLLLPSPADGRGTAITHALTSASTLCRVEPVGRWFEAFVKRRNRNASASFQELEDKKELSEESEDEELQLEEFAMLKTLDPKDWKNQDHYAVLGLGHVRYKATQRQIKAAHKAMVLKHHPDKRKAAGEPIKEGDNDYFTCITKAYEMLSDPVKRRAFNSVDPTFDNSVPSKSEAKDNFFEVFSPVFERNSRWSNKKNVPKLGDMNSSFEDVDIFYSFWYNFDSWREFSYLDEEEKEKAECRDERRWIEKQNRATRAQRKKEEMNRIRTLVDNAYSCDPRIKKFKEEEKAKKEAEKKAKAEAKRKEQEAKEKQRQAELEAARLAKEKEEEEVRQQALLAKKEKDLQKKAIKKERQKLRNSCKTWNHFSDNEAERVKMMEEVEKLCDRLELASLQCLNETLTSCTKEVGKAALEKQIEEINEQIRKEKEEAEAHMRQASKNTEKSAGGGGNGSKNWSEDDLQLLIKAVNLFPAGTNSRWEVIANYMNIHSSSGVKRTAKDVIGKAKSLQKLDPHQKDDINKKAFDKFKKEHGVVPQADNAAPSERFEGPYTDFTPWTTEEQKLLEQALKTYPVNTPERWEKIAEAVPGRTKKDCMKRYKELVEMVKAKKAAQEQVLNASRAKK</sequence>
<name>DNJC2_MACFA</name>
<reference key="1">
    <citation type="submission" date="2005-06" db="EMBL/GenBank/DDBJ databases">
        <title>DNA sequences of macaque genes expressed in brain or testis and its evolutionary implications.</title>
        <authorList>
            <consortium name="International consortium for macaque cDNA sequencing and analysis"/>
        </authorList>
    </citation>
    <scope>NUCLEOTIDE SEQUENCE [LARGE SCALE MRNA]</scope>
    <source>
        <tissue>Testis</tissue>
    </source>
</reference>
<accession>Q4R8H2</accession>
<evidence type="ECO:0000250" key="1">
    <source>
        <dbReference type="UniProtKB" id="P54103"/>
    </source>
</evidence>
<evidence type="ECO:0000250" key="2">
    <source>
        <dbReference type="UniProtKB" id="Q99543"/>
    </source>
</evidence>
<evidence type="ECO:0000255" key="3">
    <source>
        <dbReference type="PROSITE-ProRule" id="PRU00286"/>
    </source>
</evidence>
<evidence type="ECO:0000255" key="4">
    <source>
        <dbReference type="PROSITE-ProRule" id="PRU00624"/>
    </source>
</evidence>
<evidence type="ECO:0000256" key="5">
    <source>
        <dbReference type="SAM" id="MobiDB-lite"/>
    </source>
</evidence>
<feature type="chain" id="PRO_0000280178" description="DnaJ homolog subfamily C member 2">
    <location>
        <begin position="1"/>
        <end position="621"/>
    </location>
</feature>
<feature type="domain" description="J" evidence="3">
    <location>
        <begin position="88"/>
        <end position="161"/>
    </location>
</feature>
<feature type="domain" description="SANT 1" evidence="4">
    <location>
        <begin position="449"/>
        <end position="511"/>
    </location>
</feature>
<feature type="domain" description="SANT 2" evidence="4">
    <location>
        <begin position="549"/>
        <end position="604"/>
    </location>
</feature>
<feature type="region of interest" description="ZRF1-UBD">
    <location>
        <begin position="160"/>
        <end position="250"/>
    </location>
</feature>
<feature type="region of interest" description="Disordered" evidence="5">
    <location>
        <begin position="294"/>
        <end position="315"/>
    </location>
</feature>
<feature type="region of interest" description="Disordered" evidence="5">
    <location>
        <begin position="427"/>
        <end position="453"/>
    </location>
</feature>
<feature type="modified residue" description="N-acetylmethionine" evidence="2">
    <location>
        <position position="1"/>
    </location>
</feature>
<feature type="modified residue" description="Phosphoserine" evidence="2">
    <location>
        <position position="47"/>
    </location>
</feature>
<feature type="modified residue" description="Phosphoserine" evidence="2">
    <location>
        <position position="49"/>
    </location>
</feature>
<feature type="modified residue" description="Phosphoserine" evidence="2">
    <location>
        <position position="60"/>
    </location>
</feature>
<feature type="modified residue" description="Phosphoserine" evidence="2">
    <location>
        <position position="63"/>
    </location>
</feature>
<feature type="modified residue" description="Phosphoserine" evidence="1">
    <location>
        <position position="183"/>
    </location>
</feature>
<dbReference type="EMBL" id="AB168480">
    <property type="protein sequence ID" value="BAE00600.1"/>
    <property type="molecule type" value="mRNA"/>
</dbReference>
<dbReference type="RefSeq" id="NP_001270315.1">
    <property type="nucleotide sequence ID" value="NM_001283386.1"/>
</dbReference>
<dbReference type="RefSeq" id="XP_045243471.1">
    <property type="nucleotide sequence ID" value="XM_045387536.1"/>
</dbReference>
<dbReference type="BMRB" id="Q4R8H2"/>
<dbReference type="SMR" id="Q4R8H2"/>
<dbReference type="STRING" id="9541.ENSMFAP00000026650"/>
<dbReference type="Ensembl" id="ENSMFAT00000000832.2">
    <property type="protein sequence ID" value="ENSMFAP00000026650.2"/>
    <property type="gene ID" value="ENSMFAG00000044726.2"/>
</dbReference>
<dbReference type="GeneID" id="101865260"/>
<dbReference type="eggNOG" id="KOG0724">
    <property type="taxonomic scope" value="Eukaryota"/>
</dbReference>
<dbReference type="GeneTree" id="ENSGT00940000155441"/>
<dbReference type="Proteomes" id="UP000233100">
    <property type="component" value="Chromosome 3"/>
</dbReference>
<dbReference type="Bgee" id="ENSMFAG00000044726">
    <property type="expression patterns" value="Expressed in lymph node and 13 other cell types or tissues"/>
</dbReference>
<dbReference type="GO" id="GO:0005829">
    <property type="term" value="C:cytosol"/>
    <property type="evidence" value="ECO:0000250"/>
    <property type="project" value="UniProtKB"/>
</dbReference>
<dbReference type="GO" id="GO:0031965">
    <property type="term" value="C:nuclear membrane"/>
    <property type="evidence" value="ECO:0007669"/>
    <property type="project" value="Ensembl"/>
</dbReference>
<dbReference type="GO" id="GO:0005730">
    <property type="term" value="C:nucleolus"/>
    <property type="evidence" value="ECO:0007669"/>
    <property type="project" value="Ensembl"/>
</dbReference>
<dbReference type="GO" id="GO:0005634">
    <property type="term" value="C:nucleus"/>
    <property type="evidence" value="ECO:0000250"/>
    <property type="project" value="UniProtKB"/>
</dbReference>
<dbReference type="GO" id="GO:0003682">
    <property type="term" value="F:chromatin binding"/>
    <property type="evidence" value="ECO:0000250"/>
    <property type="project" value="UniProtKB"/>
</dbReference>
<dbReference type="GO" id="GO:0042393">
    <property type="term" value="F:histone binding"/>
    <property type="evidence" value="ECO:0000250"/>
    <property type="project" value="UniProtKB"/>
</dbReference>
<dbReference type="GO" id="GO:0030544">
    <property type="term" value="F:Hsp70 protein binding"/>
    <property type="evidence" value="ECO:0007669"/>
    <property type="project" value="Ensembl"/>
</dbReference>
<dbReference type="GO" id="GO:0043022">
    <property type="term" value="F:ribosome binding"/>
    <property type="evidence" value="ECO:0007669"/>
    <property type="project" value="InterPro"/>
</dbReference>
<dbReference type="GO" id="GO:0061649">
    <property type="term" value="F:ubiquitin-modified histone reader activity"/>
    <property type="evidence" value="ECO:0000250"/>
    <property type="project" value="UniProtKB"/>
</dbReference>
<dbReference type="GO" id="GO:0051083">
    <property type="term" value="P:'de novo' cotranslational protein folding"/>
    <property type="evidence" value="ECO:0007669"/>
    <property type="project" value="InterPro"/>
</dbReference>
<dbReference type="GO" id="GO:0006260">
    <property type="term" value="P:DNA replication"/>
    <property type="evidence" value="ECO:0007669"/>
    <property type="project" value="Ensembl"/>
</dbReference>
<dbReference type="GO" id="GO:2000279">
    <property type="term" value="P:negative regulation of DNA biosynthetic process"/>
    <property type="evidence" value="ECO:0007669"/>
    <property type="project" value="Ensembl"/>
</dbReference>
<dbReference type="GO" id="GO:0045893">
    <property type="term" value="P:positive regulation of DNA-templated transcription"/>
    <property type="evidence" value="ECO:0000250"/>
    <property type="project" value="UniProtKB"/>
</dbReference>
<dbReference type="GO" id="GO:0006450">
    <property type="term" value="P:regulation of translational fidelity"/>
    <property type="evidence" value="ECO:0007669"/>
    <property type="project" value="InterPro"/>
</dbReference>
<dbReference type="CDD" id="cd06257">
    <property type="entry name" value="DnaJ"/>
    <property type="match status" value="1"/>
</dbReference>
<dbReference type="CDD" id="cd00167">
    <property type="entry name" value="SANT"/>
    <property type="match status" value="2"/>
</dbReference>
<dbReference type="FunFam" id="1.10.10.60:FF:000180">
    <property type="entry name" value="DnaJ (Hsp40) homolog, subfamily C, member 2"/>
    <property type="match status" value="1"/>
</dbReference>
<dbReference type="FunFam" id="1.10.287.110:FF:000024">
    <property type="entry name" value="DnaJ (Hsp40) homolog, subfamily C, member 2"/>
    <property type="match status" value="1"/>
</dbReference>
<dbReference type="FunFam" id="1.10.10.60:FF:000215">
    <property type="entry name" value="dnaJ homolog subfamily C member 2 isoform X1"/>
    <property type="match status" value="1"/>
</dbReference>
<dbReference type="FunFam" id="1.10.8.840:FF:000001">
    <property type="entry name" value="dnaJ homolog subfamily C member 2 isoform X1"/>
    <property type="match status" value="1"/>
</dbReference>
<dbReference type="Gene3D" id="1.10.287.110">
    <property type="entry name" value="DnaJ domain"/>
    <property type="match status" value="1"/>
</dbReference>
<dbReference type="Gene3D" id="1.10.10.60">
    <property type="entry name" value="Homeodomain-like"/>
    <property type="match status" value="2"/>
</dbReference>
<dbReference type="Gene3D" id="1.10.8.840">
    <property type="entry name" value="Ribosome-associated complex head domain"/>
    <property type="match status" value="1"/>
</dbReference>
<dbReference type="InterPro" id="IPR001623">
    <property type="entry name" value="DnaJ_domain"/>
</dbReference>
<dbReference type="InterPro" id="IPR018253">
    <property type="entry name" value="DnaJ_domain_CS"/>
</dbReference>
<dbReference type="InterPro" id="IPR009057">
    <property type="entry name" value="Homeodomain-like_sf"/>
</dbReference>
<dbReference type="InterPro" id="IPR036869">
    <property type="entry name" value="J_dom_sf"/>
</dbReference>
<dbReference type="InterPro" id="IPR017930">
    <property type="entry name" value="Myb_dom"/>
</dbReference>
<dbReference type="InterPro" id="IPR032003">
    <property type="entry name" value="RAC_head"/>
</dbReference>
<dbReference type="InterPro" id="IPR042569">
    <property type="entry name" value="RAC_head_sf"/>
</dbReference>
<dbReference type="InterPro" id="IPR001005">
    <property type="entry name" value="SANT/Myb"/>
</dbReference>
<dbReference type="InterPro" id="IPR017884">
    <property type="entry name" value="SANT_dom"/>
</dbReference>
<dbReference type="InterPro" id="IPR054076">
    <property type="entry name" value="ZUO1-like_ZHD"/>
</dbReference>
<dbReference type="InterPro" id="IPR044634">
    <property type="entry name" value="Zuotin/DnaJC2"/>
</dbReference>
<dbReference type="PANTHER" id="PTHR43999">
    <property type="entry name" value="DNAJ HOMOLOG SUBFAMILY C MEMBER 2"/>
    <property type="match status" value="1"/>
</dbReference>
<dbReference type="PANTHER" id="PTHR43999:SF1">
    <property type="entry name" value="DNAJ HOMOLOG SUBFAMILY C MEMBER 2"/>
    <property type="match status" value="1"/>
</dbReference>
<dbReference type="Pfam" id="PF00226">
    <property type="entry name" value="DnaJ"/>
    <property type="match status" value="1"/>
</dbReference>
<dbReference type="Pfam" id="PF00249">
    <property type="entry name" value="Myb_DNA-binding"/>
    <property type="match status" value="1"/>
</dbReference>
<dbReference type="Pfam" id="PF16717">
    <property type="entry name" value="RAC_head"/>
    <property type="match status" value="1"/>
</dbReference>
<dbReference type="Pfam" id="PF21884">
    <property type="entry name" value="ZUO1-like_ZHD"/>
    <property type="match status" value="1"/>
</dbReference>
<dbReference type="SMART" id="SM00271">
    <property type="entry name" value="DnaJ"/>
    <property type="match status" value="1"/>
</dbReference>
<dbReference type="SMART" id="SM00717">
    <property type="entry name" value="SANT"/>
    <property type="match status" value="2"/>
</dbReference>
<dbReference type="SUPFAM" id="SSF46565">
    <property type="entry name" value="Chaperone J-domain"/>
    <property type="match status" value="1"/>
</dbReference>
<dbReference type="SUPFAM" id="SSF46689">
    <property type="entry name" value="Homeodomain-like"/>
    <property type="match status" value="2"/>
</dbReference>
<dbReference type="PROSITE" id="PS00636">
    <property type="entry name" value="DNAJ_1"/>
    <property type="match status" value="1"/>
</dbReference>
<dbReference type="PROSITE" id="PS50076">
    <property type="entry name" value="DNAJ_2"/>
    <property type="match status" value="1"/>
</dbReference>
<dbReference type="PROSITE" id="PS51293">
    <property type="entry name" value="SANT"/>
    <property type="match status" value="2"/>
</dbReference>